<reference key="1">
    <citation type="journal article" date="2005" name="DNA Res.">
        <title>Complete genome sequence of the facultative anaerobic magnetotactic bacterium Magnetospirillum sp. strain AMB-1.</title>
        <authorList>
            <person name="Matsunaga T."/>
            <person name="Okamura Y."/>
            <person name="Fukuda Y."/>
            <person name="Wahyudi A.T."/>
            <person name="Murase Y."/>
            <person name="Takeyama H."/>
        </authorList>
    </citation>
    <scope>NUCLEOTIDE SEQUENCE [LARGE SCALE GENOMIC DNA]</scope>
    <source>
        <strain>ATCC 700264 / AMB-1</strain>
    </source>
</reference>
<evidence type="ECO:0000255" key="1">
    <source>
        <dbReference type="HAMAP-Rule" id="MF_00505"/>
    </source>
</evidence>
<evidence type="ECO:0000305" key="2"/>
<keyword id="KW-0067">ATP-binding</keyword>
<keyword id="KW-0143">Chaperone</keyword>
<keyword id="KW-0963">Cytoplasm</keyword>
<keyword id="KW-0547">Nucleotide-binding</keyword>
<keyword id="KW-0346">Stress response</keyword>
<feature type="chain" id="PRO_0000236997" description="Chaperone protein HtpG">
    <location>
        <begin position="1"/>
        <end position="623"/>
    </location>
</feature>
<feature type="region of interest" description="A; substrate-binding" evidence="1">
    <location>
        <begin position="1"/>
        <end position="326"/>
    </location>
</feature>
<feature type="region of interest" description="B" evidence="1">
    <location>
        <begin position="327"/>
        <end position="543"/>
    </location>
</feature>
<feature type="region of interest" description="C" evidence="1">
    <location>
        <begin position="544"/>
        <end position="623"/>
    </location>
</feature>
<accession>Q2VZ28</accession>
<gene>
    <name evidence="1" type="primary">htpG</name>
    <name type="ordered locus">amb4343</name>
</gene>
<proteinExistence type="inferred from homology"/>
<protein>
    <recommendedName>
        <fullName evidence="1">Chaperone protein HtpG</fullName>
    </recommendedName>
    <alternativeName>
        <fullName evidence="1">Heat shock protein HtpG</fullName>
    </alternativeName>
    <alternativeName>
        <fullName evidence="1">High temperature protein G</fullName>
    </alternativeName>
</protein>
<dbReference type="EMBL" id="AP007255">
    <property type="protein sequence ID" value="BAE53147.1"/>
    <property type="status" value="ALT_INIT"/>
    <property type="molecule type" value="Genomic_DNA"/>
</dbReference>
<dbReference type="RefSeq" id="WP_043745639.1">
    <property type="nucleotide sequence ID" value="NC_007626.1"/>
</dbReference>
<dbReference type="SMR" id="Q2VZ28"/>
<dbReference type="STRING" id="342108.amb4343"/>
<dbReference type="KEGG" id="mag:amb4343"/>
<dbReference type="HOGENOM" id="CLU_006684_3_0_5"/>
<dbReference type="OrthoDB" id="9802640at2"/>
<dbReference type="Proteomes" id="UP000007058">
    <property type="component" value="Chromosome"/>
</dbReference>
<dbReference type="GO" id="GO:0005737">
    <property type="term" value="C:cytoplasm"/>
    <property type="evidence" value="ECO:0007669"/>
    <property type="project" value="UniProtKB-SubCell"/>
</dbReference>
<dbReference type="GO" id="GO:0005524">
    <property type="term" value="F:ATP binding"/>
    <property type="evidence" value="ECO:0007669"/>
    <property type="project" value="UniProtKB-UniRule"/>
</dbReference>
<dbReference type="GO" id="GO:0016887">
    <property type="term" value="F:ATP hydrolysis activity"/>
    <property type="evidence" value="ECO:0007669"/>
    <property type="project" value="InterPro"/>
</dbReference>
<dbReference type="GO" id="GO:0140662">
    <property type="term" value="F:ATP-dependent protein folding chaperone"/>
    <property type="evidence" value="ECO:0007669"/>
    <property type="project" value="InterPro"/>
</dbReference>
<dbReference type="GO" id="GO:0051082">
    <property type="term" value="F:unfolded protein binding"/>
    <property type="evidence" value="ECO:0007669"/>
    <property type="project" value="UniProtKB-UniRule"/>
</dbReference>
<dbReference type="CDD" id="cd16927">
    <property type="entry name" value="HATPase_Hsp90-like"/>
    <property type="match status" value="1"/>
</dbReference>
<dbReference type="FunFam" id="3.30.230.80:FF:000002">
    <property type="entry name" value="Molecular chaperone HtpG"/>
    <property type="match status" value="1"/>
</dbReference>
<dbReference type="FunFam" id="3.30.565.10:FF:000009">
    <property type="entry name" value="Molecular chaperone HtpG"/>
    <property type="match status" value="1"/>
</dbReference>
<dbReference type="Gene3D" id="3.30.230.80">
    <property type="match status" value="1"/>
</dbReference>
<dbReference type="Gene3D" id="3.40.50.11260">
    <property type="match status" value="1"/>
</dbReference>
<dbReference type="Gene3D" id="1.20.120.790">
    <property type="entry name" value="Heat shock protein 90, C-terminal domain"/>
    <property type="match status" value="1"/>
</dbReference>
<dbReference type="Gene3D" id="3.30.565.10">
    <property type="entry name" value="Histidine kinase-like ATPase, C-terminal domain"/>
    <property type="match status" value="1"/>
</dbReference>
<dbReference type="HAMAP" id="MF_00505">
    <property type="entry name" value="HSP90"/>
    <property type="match status" value="1"/>
</dbReference>
<dbReference type="InterPro" id="IPR036890">
    <property type="entry name" value="HATPase_C_sf"/>
</dbReference>
<dbReference type="InterPro" id="IPR019805">
    <property type="entry name" value="Heat_shock_protein_90_CS"/>
</dbReference>
<dbReference type="InterPro" id="IPR037196">
    <property type="entry name" value="HSP90_C"/>
</dbReference>
<dbReference type="InterPro" id="IPR001404">
    <property type="entry name" value="Hsp90_fam"/>
</dbReference>
<dbReference type="InterPro" id="IPR020575">
    <property type="entry name" value="Hsp90_N"/>
</dbReference>
<dbReference type="InterPro" id="IPR020568">
    <property type="entry name" value="Ribosomal_Su5_D2-typ_SF"/>
</dbReference>
<dbReference type="NCBIfam" id="NF003555">
    <property type="entry name" value="PRK05218.1"/>
    <property type="match status" value="1"/>
</dbReference>
<dbReference type="PANTHER" id="PTHR11528">
    <property type="entry name" value="HEAT SHOCK PROTEIN 90 FAMILY MEMBER"/>
    <property type="match status" value="1"/>
</dbReference>
<dbReference type="Pfam" id="PF13589">
    <property type="entry name" value="HATPase_c_3"/>
    <property type="match status" value="1"/>
</dbReference>
<dbReference type="Pfam" id="PF00183">
    <property type="entry name" value="HSP90"/>
    <property type="match status" value="1"/>
</dbReference>
<dbReference type="PIRSF" id="PIRSF002583">
    <property type="entry name" value="Hsp90"/>
    <property type="match status" value="1"/>
</dbReference>
<dbReference type="PRINTS" id="PR00775">
    <property type="entry name" value="HEATSHOCK90"/>
</dbReference>
<dbReference type="SMART" id="SM00387">
    <property type="entry name" value="HATPase_c"/>
    <property type="match status" value="1"/>
</dbReference>
<dbReference type="SUPFAM" id="SSF55874">
    <property type="entry name" value="ATPase domain of HSP90 chaperone/DNA topoisomerase II/histidine kinase"/>
    <property type="match status" value="1"/>
</dbReference>
<dbReference type="SUPFAM" id="SSF110942">
    <property type="entry name" value="HSP90 C-terminal domain"/>
    <property type="match status" value="1"/>
</dbReference>
<dbReference type="SUPFAM" id="SSF54211">
    <property type="entry name" value="Ribosomal protein S5 domain 2-like"/>
    <property type="match status" value="1"/>
</dbReference>
<dbReference type="PROSITE" id="PS00298">
    <property type="entry name" value="HSP90"/>
    <property type="match status" value="1"/>
</dbReference>
<comment type="function">
    <text evidence="1">Molecular chaperone. Has ATPase activity.</text>
</comment>
<comment type="subunit">
    <text evidence="1">Homodimer.</text>
</comment>
<comment type="subcellular location">
    <subcellularLocation>
        <location evidence="1">Cytoplasm</location>
    </subcellularLocation>
</comment>
<comment type="similarity">
    <text evidence="1">Belongs to the heat shock protein 90 family.</text>
</comment>
<comment type="sequence caution" evidence="2">
    <conflict type="erroneous initiation">
        <sequence resource="EMBL-CDS" id="BAE53147"/>
    </conflict>
</comment>
<name>HTPG_PARM1</name>
<sequence>MAEEKRQFQAEVGKLLDIVVHSLYSNKEIFLRELISNASDSCDRLRYGAITEPDLLDGDSEFRIRLVPDKDAGTLTIIDNGQGMSHDELIANLGTIAKSGTSEFLARLTGDAKKDVSLIGQFGVGFYSAFMVAEEVTVTSRKAGEAKGWKWVSDGKGEFTVSPAEDAARGAAITLKLREGETEFLDAFRLKSIVKRYSDHIAIPVTLKDADKDEETINSASALWTRSKSEITPEQYKEFYHHVAHAFDEPWSTLHYKAEGAIEYTGLLFIPSSKPLDIFHPDRKQHVKLYVRRVFITDDCEELLPPYLRFVRGVVDSQDLPLNVSREMLQHNPVLSKIRTGLVKRILGELKKKSEDAEGKYDEFWAAFGPVLKEGIYEDFERKTDILELCRFRSTHGDGLTTLADYVARMKDGQDAIYTITGDDLDQLKKSPQLEGFAAKGVEVLLLTDPIDEFWVSAVRSYAEKDFRSVAAAGADLSKVKAPEGAEDKKADEAPADELTTLIEAVKLALGERVKDVRPSERLTESAVCLVAAEGEMSMHLEKMLRAHNQAPGERARILEINPRHALIKGLAARVKAGGTDAGLEDAAFLLLDQARIIEGEPPADPAAFARRMVSVMEKGLLG</sequence>
<organism>
    <name type="scientific">Paramagnetospirillum magneticum (strain ATCC 700264 / AMB-1)</name>
    <name type="common">Magnetospirillum magneticum</name>
    <dbReference type="NCBI Taxonomy" id="342108"/>
    <lineage>
        <taxon>Bacteria</taxon>
        <taxon>Pseudomonadati</taxon>
        <taxon>Pseudomonadota</taxon>
        <taxon>Alphaproteobacteria</taxon>
        <taxon>Rhodospirillales</taxon>
        <taxon>Magnetospirillaceae</taxon>
        <taxon>Paramagnetospirillum</taxon>
    </lineage>
</organism>